<comment type="function">
    <text evidence="4">Assembles with the major capsid protein to form an icosahedral capsid with a T=7 symmetry, about 60 nm in diameter, and consisting of 415 capsid proteins (PubMed:20962334). The major and minor capsid proteins are incorporated into the capsid in about a 90/10 ratio respectively. Once the capsid formed, encapsidates one single copy of the viral genome.</text>
</comment>
<comment type="subunit">
    <text evidence="1 4 5">Interacts with the connector protein and the major capsid protein.</text>
</comment>
<comment type="subcellular location">
    <subcellularLocation>
        <location evidence="1 4 6">Virion</location>
    </subcellularLocation>
</comment>
<comment type="alternative products">
    <event type="ribosomal frameshifting"/>
    <isoform>
        <id>P19727-1</id>
        <name>VC10B</name>
        <name>Minor capsid protein 10B</name>
        <sequence type="displayed"/>
    </isoform>
    <isoform>
        <id>P19726-1</id>
        <name>VC10A</name>
        <name>Major capsid protein 10A</name>
        <sequence type="external"/>
    </isoform>
</comment>
<comment type="miscellaneous">
    <text evidence="1">The minor capsid protein is produced by a -1 ribosomal frameshift near the C-terminus of the ORF coding for the major capsid protein, producing a protein with a C-terminal extension compared to the major capsid protein. The major capsid protein is produced by conventional translation of the same ORF.</text>
</comment>
<comment type="miscellaneous">
    <molecule>Isoform VC10B</molecule>
    <text evidence="3">Produced by -1 ribosomal frameshifting.</text>
</comment>
<comment type="similarity">
    <text evidence="1">Belongs to the T7virus minor capsid protein family.</text>
</comment>
<organismHost>
    <name type="scientific">Escherichia coli</name>
    <dbReference type="NCBI Taxonomy" id="562"/>
</organismHost>
<dbReference type="EMBL" id="V01146">
    <property type="protein sequence ID" value="CAA24428.1"/>
    <property type="molecule type" value="Genomic_DNA"/>
</dbReference>
<dbReference type="PIR" id="B04344">
    <property type="entry name" value="VBBPA7"/>
</dbReference>
<dbReference type="RefSeq" id="NP_041997.1">
    <molecule id="P19727-1"/>
    <property type="nucleotide sequence ID" value="NC_001604.1"/>
</dbReference>
<dbReference type="SMR" id="P19727"/>
<dbReference type="KEGG" id="vg:1261029"/>
<dbReference type="OrthoDB" id="4979at10239"/>
<dbReference type="Proteomes" id="UP000000840">
    <property type="component" value="Genome"/>
</dbReference>
<dbReference type="GO" id="GO:0019028">
    <property type="term" value="C:viral capsid"/>
    <property type="evidence" value="ECO:0007669"/>
    <property type="project" value="UniProtKB-UniRule"/>
</dbReference>
<dbReference type="GO" id="GO:0075523">
    <property type="term" value="P:viral translational frameshifting"/>
    <property type="evidence" value="ECO:0007669"/>
    <property type="project" value="UniProtKB-KW"/>
</dbReference>
<dbReference type="HAMAP" id="MF_04119">
    <property type="entry name" value="CAPSID_PROTEIN_T7"/>
    <property type="match status" value="1"/>
</dbReference>
<dbReference type="InterPro" id="IPR049301">
    <property type="entry name" value="Capsid_Gp10A/Gp10B-like_dom"/>
</dbReference>
<dbReference type="InterPro" id="IPR039009">
    <property type="entry name" value="Capsid_Gp10A/Gp10B_dom"/>
</dbReference>
<dbReference type="Pfam" id="PF21703">
    <property type="entry name" value="Gp10A-like"/>
    <property type="match status" value="1"/>
</dbReference>
<accession>P19727</accession>
<accession>P03717</accession>
<gene>
    <name type="ordered locus">10</name>
</gene>
<evidence type="ECO:0000255" key="1">
    <source>
        <dbReference type="HAMAP-Rule" id="MF_04119"/>
    </source>
</evidence>
<evidence type="ECO:0000256" key="2">
    <source>
        <dbReference type="SAM" id="MobiDB-lite"/>
    </source>
</evidence>
<evidence type="ECO:0000269" key="3">
    <source>
    </source>
</evidence>
<evidence type="ECO:0000269" key="4">
    <source>
    </source>
</evidence>
<evidence type="ECO:0000269" key="5">
    <source>
    </source>
</evidence>
<evidence type="ECO:0000269" key="6">
    <source>
    </source>
</evidence>
<proteinExistence type="evidence at protein level"/>
<keyword id="KW-0167">Capsid protein</keyword>
<keyword id="KW-1185">Reference proteome</keyword>
<keyword id="KW-0688">Ribosomal frameshifting</keyword>
<keyword id="KW-0946">Virion</keyword>
<protein>
    <recommendedName>
        <fullName evidence="1">Minor capsid protein</fullName>
    </recommendedName>
    <alternativeName>
        <fullName>Gene product 10B</fullName>
        <shortName>Gp10B</shortName>
    </alternativeName>
    <alternativeName>
        <fullName evidence="1">Minor head protein</fullName>
    </alternativeName>
</protein>
<organism>
    <name type="scientific">Escherichia phage T7</name>
    <name type="common">Bacteriophage T7</name>
    <dbReference type="NCBI Taxonomy" id="10760"/>
    <lineage>
        <taxon>Viruses</taxon>
        <taxon>Duplodnaviria</taxon>
        <taxon>Heunggongvirae</taxon>
        <taxon>Uroviricota</taxon>
        <taxon>Caudoviricetes</taxon>
        <taxon>Autographiviridae</taxon>
        <taxon>Studiervirinae</taxon>
        <taxon>Teseptimavirus</taxon>
        <taxon>Teseptimavirus T7</taxon>
    </lineage>
</organism>
<feature type="chain" id="PRO_0000106523" description="Minor capsid protein">
    <location>
        <begin position="1"/>
        <end position="398"/>
    </location>
</feature>
<feature type="region of interest" description="Disordered" evidence="2">
    <location>
        <begin position="359"/>
        <end position="398"/>
    </location>
</feature>
<feature type="compositionally biased region" description="Polar residues" evidence="2">
    <location>
        <begin position="362"/>
        <end position="372"/>
    </location>
</feature>
<feature type="compositionally biased region" description="Low complexity" evidence="2">
    <location>
        <begin position="373"/>
        <end position="382"/>
    </location>
</feature>
<sequence length="398" mass="41830">MASMTGGQQMGTNQGKGVVAAGDKLALFLKVFGGEVLTAFARTSVTTSRHMVRSISSGKSAQFPVLGRTQAAYLAPGENLDDKRKDIKHTEKVITIDGLLTADVLIYDIEDAMNHYDVRSEYTSQLGESLAMAADGAVLAEIAGLCNVESKYNENIEGLGTATVIETTQNKAALTDQVALGKEIIAALTKARAALTKNYVPAADRVFYCDPDSYSAILAALMPNAANYAALIDPEKGSIRNVMGFEVVEVPHLTAGGAGTAREGTTGQKHVFPANKGEGNVKVAKDNVIGLFMHRSAVGTVKLRDLALERARRANFQADQIIAKYAMGHGGLRPEAAGAVVFQSGVMLGVASTVAASPEEASVTSTEETLTPAQEAARTRAANKARKEAELAAATAEQ</sequence>
<name>CAPSB_BPT7</name>
<reference key="1">
    <citation type="journal article" date="1983" name="J. Mol. Biol.">
        <title>Complete nucleotide sequence of bacteriophage T7 DNA and the locations of T7 genetic elements.</title>
        <authorList>
            <person name="Dunn J.J."/>
            <person name="Studier F.W."/>
        </authorList>
    </citation>
    <scope>NUCLEOTIDE SEQUENCE [LARGE SCALE GENOMIC DNA]</scope>
</reference>
<reference key="2">
    <citation type="journal article" date="1991" name="J. Bacteriol.">
        <title>Frameshifting in gene 10 of bacteriophage T7.</title>
        <authorList>
            <person name="Condron B.G."/>
            <person name="Atkins J.F."/>
            <person name="Gesteland R.F."/>
        </authorList>
    </citation>
    <scope>RIBOSOMAL FRAMESHIFT</scope>
</reference>
<reference key="3">
    <citation type="journal article" date="2011" name="J. Biol. Chem.">
        <title>Molecular rearrangements involved in the capsid shell maturation of bacteriophage T7.</title>
        <authorList>
            <person name="Ionel A."/>
            <person name="Velazquez-Muriel J.A."/>
            <person name="Luque D."/>
            <person name="Cuervo A."/>
            <person name="Caston J.R."/>
            <person name="Valpuesta J.M."/>
            <person name="Martin-Benito J."/>
            <person name="Carrascosa J.L."/>
        </authorList>
    </citation>
    <scope>INTERACTION WITH THE MAJOR CAPSID PROTEIN</scope>
    <scope>FUNCTION</scope>
    <scope>SUBCELLULAR LOCATION</scope>
</reference>
<reference key="4">
    <citation type="journal article" date="2013" name="Proc. Natl. Acad. Sci. U.S.A.">
        <title>Visualization of uncorrelated, tandem symmetry mismatches in the internal genome packaging apparatus of bacteriophage T7.</title>
        <authorList>
            <person name="Guo F."/>
            <person name="Liu Z."/>
            <person name="Vago F."/>
            <person name="Ren Y."/>
            <person name="Wu W."/>
            <person name="Wright E.T."/>
            <person name="Serwer P."/>
            <person name="Jiang W."/>
        </authorList>
    </citation>
    <scope>INTERACTION WITH THE CONNECTOR PROTEIN</scope>
</reference>
<reference key="5">
    <citation type="journal article" date="2013" name="J. Biol. Chem.">
        <title>Structural characterization of the bacteriophage T7 tail machinery.</title>
        <authorList>
            <person name="Cuervo A."/>
            <person name="Pulido-Cid M."/>
            <person name="Chagoyen M."/>
            <person name="Arranz R."/>
            <person name="Gonzalez-Garcia V.A."/>
            <person name="Garcia-Doval C."/>
            <person name="Caston J.R."/>
            <person name="Valpuesta J.M."/>
            <person name="van Raaij M.J."/>
            <person name="Martin-Benito J."/>
            <person name="Carrascosa J.L."/>
        </authorList>
    </citation>
    <scope>SUBCELLULAR LOCATION</scope>
</reference>